<keyword id="KW-0046">Antibiotic resistance</keyword>
<keyword id="KW-0378">Hydrolase</keyword>
<keyword id="KW-0441">Lipid A biosynthesis</keyword>
<keyword id="KW-0444">Lipid biosynthesis</keyword>
<keyword id="KW-0443">Lipid metabolism</keyword>
<keyword id="KW-0448">Lipopolysaccharide biosynthesis</keyword>
<name>ARND_ECODH</name>
<dbReference type="EC" id="3.5.1.n3" evidence="1"/>
<dbReference type="EMBL" id="CP000948">
    <property type="protein sequence ID" value="ACB03416.1"/>
    <property type="molecule type" value="Genomic_DNA"/>
</dbReference>
<dbReference type="RefSeq" id="WP_000169728.1">
    <property type="nucleotide sequence ID" value="NC_010473.1"/>
</dbReference>
<dbReference type="SMR" id="B1X8W9"/>
<dbReference type="GeneID" id="93774918"/>
<dbReference type="KEGG" id="ecd:ECDH10B_2416"/>
<dbReference type="HOGENOM" id="CLU_084199_0_0_6"/>
<dbReference type="UniPathway" id="UPA00030"/>
<dbReference type="UniPathway" id="UPA00036">
    <property type="reaction ID" value="UER00496"/>
</dbReference>
<dbReference type="GO" id="GO:0016020">
    <property type="term" value="C:membrane"/>
    <property type="evidence" value="ECO:0007669"/>
    <property type="project" value="GOC"/>
</dbReference>
<dbReference type="GO" id="GO:0016811">
    <property type="term" value="F:hydrolase activity, acting on carbon-nitrogen (but not peptide) bonds, in linear amides"/>
    <property type="evidence" value="ECO:0007669"/>
    <property type="project" value="UniProtKB-UniRule"/>
</dbReference>
<dbReference type="GO" id="GO:0036108">
    <property type="term" value="P:4-amino-4-deoxy-alpha-L-arabinopyranosyl undecaprenyl phosphate biosynthetic process"/>
    <property type="evidence" value="ECO:0007669"/>
    <property type="project" value="UniProtKB-UniRule"/>
</dbReference>
<dbReference type="GO" id="GO:0009245">
    <property type="term" value="P:lipid A biosynthetic process"/>
    <property type="evidence" value="ECO:0007669"/>
    <property type="project" value="UniProtKB-UniRule"/>
</dbReference>
<dbReference type="GO" id="GO:0009103">
    <property type="term" value="P:lipopolysaccharide biosynthetic process"/>
    <property type="evidence" value="ECO:0007669"/>
    <property type="project" value="UniProtKB-UniRule"/>
</dbReference>
<dbReference type="GO" id="GO:0046677">
    <property type="term" value="P:response to antibiotic"/>
    <property type="evidence" value="ECO:0007669"/>
    <property type="project" value="UniProtKB-KW"/>
</dbReference>
<dbReference type="CDD" id="cd10939">
    <property type="entry name" value="CE4_ArnD"/>
    <property type="match status" value="1"/>
</dbReference>
<dbReference type="Gene3D" id="3.20.20.370">
    <property type="entry name" value="Glycoside hydrolase/deacetylase"/>
    <property type="match status" value="1"/>
</dbReference>
<dbReference type="HAMAP" id="MF_01870">
    <property type="entry name" value="ArnD"/>
    <property type="match status" value="1"/>
</dbReference>
<dbReference type="InterPro" id="IPR023557">
    <property type="entry name" value="ArnD"/>
</dbReference>
<dbReference type="InterPro" id="IPR011330">
    <property type="entry name" value="Glyco_hydro/deAcase_b/a-brl"/>
</dbReference>
<dbReference type="InterPro" id="IPR002509">
    <property type="entry name" value="NODB_dom"/>
</dbReference>
<dbReference type="InterPro" id="IPR050248">
    <property type="entry name" value="Polysacc_deacetylase_ArnD"/>
</dbReference>
<dbReference type="NCBIfam" id="NF011923">
    <property type="entry name" value="PRK15394.1"/>
    <property type="match status" value="1"/>
</dbReference>
<dbReference type="PANTHER" id="PTHR10587:SF137">
    <property type="entry name" value="4-DEOXY-4-FORMAMIDO-L-ARABINOSE-PHOSPHOUNDECAPRENOL DEFORMYLASE ARND-RELATED"/>
    <property type="match status" value="1"/>
</dbReference>
<dbReference type="PANTHER" id="PTHR10587">
    <property type="entry name" value="GLYCOSYL TRANSFERASE-RELATED"/>
    <property type="match status" value="1"/>
</dbReference>
<dbReference type="Pfam" id="PF01522">
    <property type="entry name" value="Polysacc_deac_1"/>
    <property type="match status" value="1"/>
</dbReference>
<dbReference type="SUPFAM" id="SSF88713">
    <property type="entry name" value="Glycoside hydrolase/deacetylase"/>
    <property type="match status" value="1"/>
</dbReference>
<dbReference type="PROSITE" id="PS51677">
    <property type="entry name" value="NODB"/>
    <property type="match status" value="1"/>
</dbReference>
<organism>
    <name type="scientific">Escherichia coli (strain K12 / DH10B)</name>
    <dbReference type="NCBI Taxonomy" id="316385"/>
    <lineage>
        <taxon>Bacteria</taxon>
        <taxon>Pseudomonadati</taxon>
        <taxon>Pseudomonadota</taxon>
        <taxon>Gammaproteobacteria</taxon>
        <taxon>Enterobacterales</taxon>
        <taxon>Enterobacteriaceae</taxon>
        <taxon>Escherichia</taxon>
    </lineage>
</organism>
<feature type="chain" id="PRO_0000383497" description="Probable 4-deoxy-4-formamido-L-arabinose-phosphoundecaprenol deformylase ArnD">
    <location>
        <begin position="1"/>
        <end position="296"/>
    </location>
</feature>
<feature type="domain" description="NodB homology" evidence="1">
    <location>
        <begin position="2"/>
        <end position="260"/>
    </location>
</feature>
<protein>
    <recommendedName>
        <fullName evidence="1">Probable 4-deoxy-4-formamido-L-arabinose-phosphoundecaprenol deformylase ArnD</fullName>
        <ecNumber evidence="1">3.5.1.n3</ecNumber>
    </recommendedName>
</protein>
<sequence>MTKVGLRIDVDTFRGTREGVPRLLEILSKHNIQASIFFSVGPDNMGRHLWRLVKPQFLWKMLRSNAASLYGWDILLAGTAWPGKEIGHANADIIREAAKHHEVGLHAWDHHAWQARSGNWDRQTMIDDIARGLRTLEEIIGQPVTCSAAAGWRADQKVIEAKEAFHLRYNSDCRGAMPFRPLLESGNPGTAQIPVTLPTWDEVIGRDVKAEDFNGWLLNRILRDKGTPVYTIHAEVEGCAYQHNFVDLLKRAAQEGVTFCPLSELLSETLPLGQVVRGNIAGREGWLGCQQIAGSR</sequence>
<evidence type="ECO:0000255" key="1">
    <source>
        <dbReference type="HAMAP-Rule" id="MF_01870"/>
    </source>
</evidence>
<proteinExistence type="inferred from homology"/>
<accession>B1X8W9</accession>
<gene>
    <name evidence="1" type="primary">arnD</name>
    <name type="ordered locus">ECDH10B_2416</name>
</gene>
<comment type="function">
    <text evidence="1">Catalyzes the deformylation of 4-deoxy-4-formamido-L-arabinose-phosphoundecaprenol to 4-amino-4-deoxy-L-arabinose-phosphoundecaprenol. The modified arabinose is attached to lipid A and is required for resistance to polymyxin and cationic antimicrobial peptides.</text>
</comment>
<comment type="catalytic activity">
    <reaction evidence="1">
        <text>4-deoxy-4-formamido-alpha-L-arabinopyranosyl di-trans,octa-cis-undecaprenyl phosphate + H2O = 4-amino-4-deoxy-alpha-L-arabinopyranosyl di-trans,octa-cis-undecaprenyl phosphate + formate</text>
        <dbReference type="Rhea" id="RHEA:27734"/>
        <dbReference type="ChEBI" id="CHEBI:15377"/>
        <dbReference type="ChEBI" id="CHEBI:15740"/>
        <dbReference type="ChEBI" id="CHEBI:58909"/>
        <dbReference type="ChEBI" id="CHEBI:60463"/>
        <dbReference type="EC" id="3.5.1.n3"/>
    </reaction>
</comment>
<comment type="pathway">
    <text evidence="1">Glycolipid biosynthesis; 4-amino-4-deoxy-alpha-L-arabinose undecaprenyl phosphate biosynthesis; 4-amino-4-deoxy-alpha-L-arabinose undecaprenyl phosphate from UDP-4-deoxy-4-formamido-beta-L-arabinose and undecaprenyl phosphate: step 2/2.</text>
</comment>
<comment type="pathway">
    <text evidence="1">Bacterial outer membrane biogenesis; lipopolysaccharide biosynthesis.</text>
</comment>
<comment type="similarity">
    <text evidence="1">Belongs to the polysaccharide deacetylase family. ArnD deformylase subfamily.</text>
</comment>
<reference key="1">
    <citation type="journal article" date="2008" name="J. Bacteriol.">
        <title>The complete genome sequence of Escherichia coli DH10B: insights into the biology of a laboratory workhorse.</title>
        <authorList>
            <person name="Durfee T."/>
            <person name="Nelson R."/>
            <person name="Baldwin S."/>
            <person name="Plunkett G. III"/>
            <person name="Burland V."/>
            <person name="Mau B."/>
            <person name="Petrosino J.F."/>
            <person name="Qin X."/>
            <person name="Muzny D.M."/>
            <person name="Ayele M."/>
            <person name="Gibbs R.A."/>
            <person name="Csorgo B."/>
            <person name="Posfai G."/>
            <person name="Weinstock G.M."/>
            <person name="Blattner F.R."/>
        </authorList>
    </citation>
    <scope>NUCLEOTIDE SEQUENCE [LARGE SCALE GENOMIC DNA]</scope>
    <source>
        <strain>K12 / DH10B</strain>
    </source>
</reference>